<gene>
    <name evidence="1" type="primary">glyQ</name>
    <name type="ordered locus">Fphi_0320</name>
</gene>
<protein>
    <recommendedName>
        <fullName evidence="1">Glycine--tRNA ligase alpha subunit</fullName>
        <ecNumber evidence="1">6.1.1.14</ecNumber>
    </recommendedName>
    <alternativeName>
        <fullName evidence="1">Glycyl-tRNA synthetase alpha subunit</fullName>
        <shortName evidence="1">GlyRS</shortName>
    </alternativeName>
</protein>
<accession>B0TZH7</accession>
<sequence length="296" mass="34292">MLTFQEIILKLHHYWASKGCAIIQPLDMEVGAGTFHPATTLRAIGPEPWTAAYVQPSRRPTDGRYGENPNRTQHYYQYQVVMKPSPDDIQELYLGSLRELGIDPLENDIRFVEDNWESPTLGAWGLGWEVWSNGMEITQFTYFQQVGGLECKPVMGEITYGLERLAMYIQNVDSMYDILWANTQNGPLYYRDVFLQNEIEMSTYNFEEANVEELFKQFDLLEKEGYRLVGKNLPIPAYEFVLKASHTFNLLDARHAISVTERQGYILRVRKLALEVAKEYYSAREKLGFPAFKKNN</sequence>
<proteinExistence type="inferred from homology"/>
<organism>
    <name type="scientific">Francisella philomiragia subsp. philomiragia (strain ATCC 25017 / CCUG 19701 / FSC 153 / O#319-036)</name>
    <dbReference type="NCBI Taxonomy" id="484022"/>
    <lineage>
        <taxon>Bacteria</taxon>
        <taxon>Pseudomonadati</taxon>
        <taxon>Pseudomonadota</taxon>
        <taxon>Gammaproteobacteria</taxon>
        <taxon>Thiotrichales</taxon>
        <taxon>Francisellaceae</taxon>
        <taxon>Francisella</taxon>
    </lineage>
</organism>
<evidence type="ECO:0000255" key="1">
    <source>
        <dbReference type="HAMAP-Rule" id="MF_00254"/>
    </source>
</evidence>
<comment type="catalytic activity">
    <reaction evidence="1">
        <text>tRNA(Gly) + glycine + ATP = glycyl-tRNA(Gly) + AMP + diphosphate</text>
        <dbReference type="Rhea" id="RHEA:16013"/>
        <dbReference type="Rhea" id="RHEA-COMP:9664"/>
        <dbReference type="Rhea" id="RHEA-COMP:9683"/>
        <dbReference type="ChEBI" id="CHEBI:30616"/>
        <dbReference type="ChEBI" id="CHEBI:33019"/>
        <dbReference type="ChEBI" id="CHEBI:57305"/>
        <dbReference type="ChEBI" id="CHEBI:78442"/>
        <dbReference type="ChEBI" id="CHEBI:78522"/>
        <dbReference type="ChEBI" id="CHEBI:456215"/>
        <dbReference type="EC" id="6.1.1.14"/>
    </reaction>
</comment>
<comment type="subunit">
    <text evidence="1">Tetramer of two alpha and two beta subunits.</text>
</comment>
<comment type="subcellular location">
    <subcellularLocation>
        <location evidence="1">Cytoplasm</location>
    </subcellularLocation>
</comment>
<comment type="similarity">
    <text evidence="1">Belongs to the class-II aminoacyl-tRNA synthetase family.</text>
</comment>
<name>SYGA_FRAP2</name>
<keyword id="KW-0030">Aminoacyl-tRNA synthetase</keyword>
<keyword id="KW-0067">ATP-binding</keyword>
<keyword id="KW-0963">Cytoplasm</keyword>
<keyword id="KW-0436">Ligase</keyword>
<keyword id="KW-0547">Nucleotide-binding</keyword>
<keyword id="KW-0648">Protein biosynthesis</keyword>
<dbReference type="EC" id="6.1.1.14" evidence="1"/>
<dbReference type="EMBL" id="CP000937">
    <property type="protein sequence ID" value="ABZ86536.1"/>
    <property type="molecule type" value="Genomic_DNA"/>
</dbReference>
<dbReference type="SMR" id="B0TZH7"/>
<dbReference type="KEGG" id="fph:Fphi_0320"/>
<dbReference type="eggNOG" id="COG0752">
    <property type="taxonomic scope" value="Bacteria"/>
</dbReference>
<dbReference type="HOGENOM" id="CLU_057066_1_0_6"/>
<dbReference type="GO" id="GO:0005829">
    <property type="term" value="C:cytosol"/>
    <property type="evidence" value="ECO:0007669"/>
    <property type="project" value="TreeGrafter"/>
</dbReference>
<dbReference type="GO" id="GO:0005524">
    <property type="term" value="F:ATP binding"/>
    <property type="evidence" value="ECO:0007669"/>
    <property type="project" value="UniProtKB-UniRule"/>
</dbReference>
<dbReference type="GO" id="GO:0004820">
    <property type="term" value="F:glycine-tRNA ligase activity"/>
    <property type="evidence" value="ECO:0007669"/>
    <property type="project" value="UniProtKB-UniRule"/>
</dbReference>
<dbReference type="GO" id="GO:0006426">
    <property type="term" value="P:glycyl-tRNA aminoacylation"/>
    <property type="evidence" value="ECO:0007669"/>
    <property type="project" value="UniProtKB-UniRule"/>
</dbReference>
<dbReference type="CDD" id="cd00733">
    <property type="entry name" value="GlyRS_alpha_core"/>
    <property type="match status" value="1"/>
</dbReference>
<dbReference type="FunFam" id="3.30.930.10:FF:000006">
    <property type="entry name" value="Glycine--tRNA ligase alpha subunit"/>
    <property type="match status" value="1"/>
</dbReference>
<dbReference type="Gene3D" id="3.30.930.10">
    <property type="entry name" value="Bira Bifunctional Protein, Domain 2"/>
    <property type="match status" value="1"/>
</dbReference>
<dbReference type="Gene3D" id="1.20.58.180">
    <property type="entry name" value="Class II aaRS and biotin synthetases, domain 2"/>
    <property type="match status" value="1"/>
</dbReference>
<dbReference type="HAMAP" id="MF_00254">
    <property type="entry name" value="Gly_tRNA_synth_alpha"/>
    <property type="match status" value="1"/>
</dbReference>
<dbReference type="InterPro" id="IPR045864">
    <property type="entry name" value="aa-tRNA-synth_II/BPL/LPL"/>
</dbReference>
<dbReference type="InterPro" id="IPR006194">
    <property type="entry name" value="Gly-tRNA-synth_heterodimer"/>
</dbReference>
<dbReference type="InterPro" id="IPR002310">
    <property type="entry name" value="Gly-tRNA_ligase_asu"/>
</dbReference>
<dbReference type="NCBIfam" id="TIGR00388">
    <property type="entry name" value="glyQ"/>
    <property type="match status" value="1"/>
</dbReference>
<dbReference type="NCBIfam" id="NF006827">
    <property type="entry name" value="PRK09348.1"/>
    <property type="match status" value="1"/>
</dbReference>
<dbReference type="PANTHER" id="PTHR30075:SF2">
    <property type="entry name" value="GLYCINE--TRNA LIGASE, CHLOROPLASTIC_MITOCHONDRIAL 2"/>
    <property type="match status" value="1"/>
</dbReference>
<dbReference type="PANTHER" id="PTHR30075">
    <property type="entry name" value="GLYCYL-TRNA SYNTHETASE"/>
    <property type="match status" value="1"/>
</dbReference>
<dbReference type="Pfam" id="PF02091">
    <property type="entry name" value="tRNA-synt_2e"/>
    <property type="match status" value="1"/>
</dbReference>
<dbReference type="PRINTS" id="PR01044">
    <property type="entry name" value="TRNASYNTHGA"/>
</dbReference>
<dbReference type="SUPFAM" id="SSF55681">
    <property type="entry name" value="Class II aaRS and biotin synthetases"/>
    <property type="match status" value="1"/>
</dbReference>
<dbReference type="PROSITE" id="PS50861">
    <property type="entry name" value="AA_TRNA_LIGASE_II_GLYAB"/>
    <property type="match status" value="1"/>
</dbReference>
<reference key="1">
    <citation type="submission" date="2007-12" db="EMBL/GenBank/DDBJ databases">
        <title>Complete sequence of chromosome of Francisella philomiragia subsp. philomiragia ATCC 25017.</title>
        <authorList>
            <consortium name="US DOE Joint Genome Institute"/>
            <person name="Copeland A."/>
            <person name="Lucas S."/>
            <person name="Lapidus A."/>
            <person name="Barry K."/>
            <person name="Detter J.C."/>
            <person name="Glavina del Rio T."/>
            <person name="Hammon N."/>
            <person name="Israni S."/>
            <person name="Dalin E."/>
            <person name="Tice H."/>
            <person name="Pitluck S."/>
            <person name="Chain P."/>
            <person name="Malfatti S."/>
            <person name="Shin M."/>
            <person name="Vergez L."/>
            <person name="Schmutz J."/>
            <person name="Larimer F."/>
            <person name="Land M."/>
            <person name="Hauser L."/>
            <person name="Richardson P."/>
        </authorList>
    </citation>
    <scope>NUCLEOTIDE SEQUENCE [LARGE SCALE GENOMIC DNA]</scope>
    <source>
        <strain>ATCC 25017 / CCUG 19701 / FSC 153 / O#319-036</strain>
    </source>
</reference>
<feature type="chain" id="PRO_1000101190" description="Glycine--tRNA ligase alpha subunit">
    <location>
        <begin position="1"/>
        <end position="296"/>
    </location>
</feature>